<protein>
    <recommendedName>
        <fullName evidence="4">Malonyl-coenzyme:anthocyanin 5-O-glucoside-6'''-O-malonyltransferase</fullName>
        <shortName evidence="7">Malonyl CoA:anthocyanin 5-O-glucoside-6'''-O-malonyltransferase</shortName>
        <shortName evidence="4">Ss5MaT1</shortName>
        <ecNumber>2.3.1.172</ecNumber>
    </recommendedName>
</protein>
<proteinExistence type="evidence at protein level"/>
<organism>
    <name type="scientific">Salvia splendens</name>
    <name type="common">Scarlet sage</name>
    <dbReference type="NCBI Taxonomy" id="180675"/>
    <lineage>
        <taxon>Eukaryota</taxon>
        <taxon>Viridiplantae</taxon>
        <taxon>Streptophyta</taxon>
        <taxon>Embryophyta</taxon>
        <taxon>Tracheophyta</taxon>
        <taxon>Spermatophyta</taxon>
        <taxon>Magnoliopsida</taxon>
        <taxon>eudicotyledons</taxon>
        <taxon>Gunneridae</taxon>
        <taxon>Pentapetalae</taxon>
        <taxon>asterids</taxon>
        <taxon>lamiids</taxon>
        <taxon>Lamiales</taxon>
        <taxon>Lamiaceae</taxon>
        <taxon>Nepetoideae</taxon>
        <taxon>Mentheae</taxon>
        <taxon>Salviinae</taxon>
        <taxon>Salvia</taxon>
        <taxon>Salvia subgen. Calosphace</taxon>
        <taxon>core Calosphace</taxon>
    </lineage>
</organism>
<dbReference type="EC" id="2.3.1.172"/>
<dbReference type="EMBL" id="AF405707">
    <property type="protein sequence ID" value="AAL50566.1"/>
    <property type="molecule type" value="mRNA"/>
</dbReference>
<dbReference type="SMR" id="Q8W1W9"/>
<dbReference type="KEGG" id="ag:AAL50566"/>
<dbReference type="OrthoDB" id="877552at2759"/>
<dbReference type="BRENDA" id="2.3.1.172">
    <property type="organism ID" value="7433"/>
</dbReference>
<dbReference type="SABIO-RK" id="Q8W1W9"/>
<dbReference type="UniPathway" id="UPA00009"/>
<dbReference type="GO" id="GO:0033810">
    <property type="term" value="F:anthocyanin 5-O-glucoside 6'''-O-malonyltransferase activity"/>
    <property type="evidence" value="ECO:0000314"/>
    <property type="project" value="UniProtKB"/>
</dbReference>
<dbReference type="GO" id="GO:0009718">
    <property type="term" value="P:anthocyanin-containing compound biosynthetic process"/>
    <property type="evidence" value="ECO:0000314"/>
    <property type="project" value="UniProtKB"/>
</dbReference>
<dbReference type="GO" id="GO:0009698">
    <property type="term" value="P:phenylpropanoid metabolic process"/>
    <property type="evidence" value="ECO:0007669"/>
    <property type="project" value="UniProtKB-KW"/>
</dbReference>
<dbReference type="FunFam" id="3.30.559.10:FF:000046">
    <property type="entry name" value="Phenolic glucoside malonyltransferase 1"/>
    <property type="match status" value="1"/>
</dbReference>
<dbReference type="Gene3D" id="3.30.559.10">
    <property type="entry name" value="Chloramphenicol acetyltransferase-like domain"/>
    <property type="match status" value="2"/>
</dbReference>
<dbReference type="InterPro" id="IPR023213">
    <property type="entry name" value="CAT-like_dom_sf"/>
</dbReference>
<dbReference type="InterPro" id="IPR051504">
    <property type="entry name" value="Plant_metabolite_acyltrans"/>
</dbReference>
<dbReference type="PANTHER" id="PTHR31625">
    <property type="match status" value="1"/>
</dbReference>
<dbReference type="Pfam" id="PF02458">
    <property type="entry name" value="Transferase"/>
    <property type="match status" value="1"/>
</dbReference>
<name>5MAT1_SALSN</name>
<gene>
    <name evidence="4" type="primary">5MAT1</name>
</gene>
<comment type="function">
    <text evidence="2">Catalyzes the transfer of a malonyl group from malonyl-CoA to the 6'''-hydroxyl group of the 5-glucosyl moiety of anthocyanins. Active towards bisdemalonylsalvianin (pelargonidin 3-O-(6-caffeoyl-beta-D-glucoside) 5-O-beta-D-glucoside) and shisonin, but not towards nodemalonylsalvianin, salvianin, pelargonidin 3,5-diglucoside and delphinidin 3,5-diglucoside.</text>
</comment>
<comment type="catalytic activity">
    <reaction evidence="2">
        <text>pelargonidin 3-O-(6-O-[(E)-caffeoyl]-beta-D-glucoside) 5-O-beta-D-glucoside + malonyl-CoA = 4'''-demalonylsalvianin + CoA</text>
        <dbReference type="Rhea" id="RHEA:21988"/>
        <dbReference type="ChEBI" id="CHEBI:57287"/>
        <dbReference type="ChEBI" id="CHEBI:57384"/>
        <dbReference type="ChEBI" id="CHEBI:58638"/>
        <dbReference type="ChEBI" id="CHEBI:58640"/>
        <dbReference type="EC" id="2.3.1.172"/>
    </reaction>
</comment>
<comment type="activity regulation">
    <text evidence="2">Completely inhibited by 10 mM p-coumaric acid, this inhibition is rapid, reversible and non-competitive. Completely inhibited by 0.1 mM Cu(2+), 0.1 mM Hg(2+) and 10 mM caffeic acid. Partially inhibited by 5 mM N-ethylmaleimide, 1 mM diethylpyrocarbonate and 1 mM acetyl-CoA.</text>
</comment>
<comment type="biophysicochemical properties">
    <kinetics>
        <KM evidence="2">101 uM for bisdemalonylsalvianin (with malonyl-CoA as cosubstrate)</KM>
        <KM evidence="2">40.2 uM for shisonin (with malonyl-CoA as cosubstrate)</KM>
        <KM evidence="2">57 uM for malonyl-CoA (with bisdemalonylsalvianin as cosubstrate)</KM>
        <KM evidence="2">14.1 uM for malonyl-CoA (with shisonin as cosubstrate)</KM>
    </kinetics>
    <phDependence>
        <text evidence="2">Optimum pH is 8.0. Active over the pH range 6.0-11.0. Stable at pH 7.5 for 20 hours at 20 degrees Celsius.</text>
    </phDependence>
    <temperatureDependence>
        <text evidence="2">Stable below 30 degrees Celsius for 20 minutes at pH 7.0.</text>
    </temperatureDependence>
</comment>
<comment type="pathway">
    <text>Pigment biosynthesis; anthocyanin biosynthesis.</text>
</comment>
<comment type="tissue specificity">
    <text evidence="2">Detected in petals and sepals, and at lower levels in bracts and red stems.</text>
</comment>
<comment type="developmental stage">
    <text evidence="2">Highest levels are present in the petals and sepals of young to opening flowers.</text>
</comment>
<comment type="similarity">
    <text evidence="1">Belongs to the plant acyltransferase family.</text>
</comment>
<accession>Q8W1W9</accession>
<sequence>MTTTTTILETCHIPPPPAANDLSIPLSFFDIKWLHYHPVRRLLFYHHPSSKSQFLHTIVPHLKQSLSLALTHYLPVAGNLLYPSNTEKFPQLRYAAGDSVPVTIAESNSDFESLTGNHTRDADQFYDLLPPIPPIEEESDWKLINIFAVQITLFPGEGICIGFSNHHCLGDARSIVGFISAWGEINGIGGYEGFLSNHSDSLSLPIFDRSFINDPNKIDAIFWKVLRNIPLKTASFPLPTNRVRSTFLLRRSDIEKLKTATKSPASSFVAAAAFVWSCMVKSGDKSDENAPELFIIPADARGRVDPPIPENYFGNCIVSSVAQVERGKLAAEDGFAVAAEAIGGEIEGKLKNRDEILRGAENWMSDIFKCFGMSVLGVSGSPKFDLLKADFGWGKARKLEVLSIDGENHSMSLCSSSDFNGGLEVGLSLPRERMAAFEEVFRASIMAASGPARRSPALVEPL</sequence>
<keyword id="KW-0012">Acyltransferase</keyword>
<keyword id="KW-0587">Phenylpropanoid metabolism</keyword>
<keyword id="KW-0808">Transferase</keyword>
<evidence type="ECO:0000255" key="1"/>
<evidence type="ECO:0000269" key="2">
    <source>
    </source>
</evidence>
<evidence type="ECO:0000269" key="3">
    <source>
    </source>
</evidence>
<evidence type="ECO:0000303" key="4">
    <source>
    </source>
</evidence>
<evidence type="ECO:0000305" key="5"/>
<evidence type="ECO:0000305" key="6">
    <source>
    </source>
</evidence>
<evidence type="ECO:0000312" key="7">
    <source>
        <dbReference type="EMBL" id="AAL50566.1"/>
    </source>
</evidence>
<reference evidence="5 7" key="1">
    <citation type="journal article" date="2001" name="J. Biol. Chem.">
        <title>Malonyl-CoA:anthocyanin 5-O-glucoside-6'''-O-malonyltransferase from scarlet sage (Salvia splendens) flowers. Enzyme purification, gene cloning, expression, and characterization.</title>
        <authorList>
            <person name="Suzuki H."/>
            <person name="Nakayama T."/>
            <person name="Yonekura-Sakakibara K."/>
            <person name="Fukui Y."/>
            <person name="Nakamura N."/>
            <person name="Nakao M."/>
            <person name="Tanaka Y."/>
            <person name="Yamaguchi M.A."/>
            <person name="Kusumi T."/>
            <person name="Nishino T."/>
        </authorList>
    </citation>
    <scope>NUCLEOTIDE SEQUENCE [MRNA]</scope>
    <scope>FUNCTION</scope>
    <scope>CATALYTIC ACTIVITY</scope>
    <scope>ACTIVITY REGULATION</scope>
    <scope>BIOPHYSICOCHEMICAL PROPERTIES</scope>
    <scope>TISSUE SPECIFICITY</scope>
    <scope>DEVELOPMENTAL STAGE</scope>
    <source>
        <tissue evidence="2">Petal</tissue>
    </source>
</reference>
<reference evidence="5" key="2">
    <citation type="journal article" date="2003" name="Biochemistry">
        <title>Proposed mechanism and functional amino acid residues of malonyl-CoA:anthocyanin 5-O-glucoside-6'''-O-malonyltransferase from flowers of Salvia splendens, a member of the versatile plant acyltransferase family.</title>
        <authorList>
            <person name="Suzuki H."/>
            <person name="Nakayama T."/>
            <person name="Nishino T."/>
        </authorList>
    </citation>
    <scope>MUTAGENESIS OF TYR-45; GLN-150; HIS-166; HIS-167; CYS-168; ASP-171; LYS-258; ARG-301; ASN-315 AND ASP-390</scope>
    <scope>PROPOSED ENZYME MECHANISM</scope>
    <scope>ACTIVE SITES</scope>
</reference>
<feature type="chain" id="PRO_0000405127" description="Malonyl-coenzyme:anthocyanin 5-O-glucoside-6'''-O-malonyltransferase">
    <location>
        <begin position="1"/>
        <end position="462"/>
    </location>
</feature>
<feature type="active site" description="Proton acceptor" evidence="6">
    <location>
        <position position="167"/>
    </location>
</feature>
<feature type="active site" description="Proton acceptor" evidence="6">
    <location>
        <position position="390"/>
    </location>
</feature>
<feature type="mutagenesis site" description="Activity reduced to 11% of wild-type." evidence="3">
    <original>Y</original>
    <variation>A</variation>
    <location>
        <position position="45"/>
    </location>
</feature>
<feature type="mutagenesis site" description="Activity reduced to 67% of wild-type." evidence="3">
    <original>Q</original>
    <variation>A</variation>
    <location>
        <position position="150"/>
    </location>
</feature>
<feature type="mutagenesis site" description="Activity reduced to 23% of wild-type." evidence="3">
    <original>H</original>
    <variation>A</variation>
    <location>
        <position position="166"/>
    </location>
</feature>
<feature type="mutagenesis site" description="Activity reduced to 0.02% of wild-type." evidence="3">
    <original>H</original>
    <variation>A</variation>
    <location>
        <position position="167"/>
    </location>
</feature>
<feature type="mutagenesis site" description="Activity reduced to 8% of wild-type." evidence="3">
    <original>C</original>
    <variation>A</variation>
    <location>
        <position position="168"/>
    </location>
</feature>
<feature type="mutagenesis site" description="Activity reduced to 0.8% of wild-type." evidence="3">
    <original>D</original>
    <variation>A</variation>
    <location>
        <position position="171"/>
    </location>
</feature>
<feature type="mutagenesis site" description="Activity reduced to 61% of wild-type." evidence="3">
    <original>K</original>
    <variation>A</variation>
    <location>
        <position position="258"/>
    </location>
</feature>
<feature type="mutagenesis site" description="Activity reduced to 17% of wild-type." evidence="3">
    <original>R</original>
    <variation>A</variation>
    <location>
        <position position="301"/>
    </location>
</feature>
<feature type="mutagenesis site" description="Activity reduced to 1.1% of wild-type." evidence="3">
    <original>N</original>
    <variation>A</variation>
    <location>
        <position position="315"/>
    </location>
</feature>
<feature type="mutagenesis site" description="Activity abolished." evidence="3">
    <original>D</original>
    <variation>A</variation>
    <location>
        <position position="390"/>
    </location>
</feature>